<proteinExistence type="evidence at protein level"/>
<accession>Q5I0G4</accession>
<accession>G3V7G8</accession>
<sequence>MPCLLPTLLRATRAALLLQSPRVVAAPASQRLLSAPAQPAASPSSMDSAEELLAPLRLAVRQQGDFVRKLKEDKAPQVDVDRAVAELKARKRVLEAKELALQPKDDIVDRAKMEDTLKRRFFYDQAFAIYGGVSGLYDFGPVGCALKNNIIQTWRQHFIQEEQILEIDCTMLTPEPVLKTSGHVDKFADFMVKDVKNGECFRADHLLKAHLQKLMSDKKCSAEKKSEMESVLAQLDNYGQQELADLFVNYNVKSPTTGNDLSPPVPFNLMFQTFIGPGGNMPGYLRPETAQGIFLNFKRLLEFNQGKLPFAAAQIGNSFRNEISPRSGLIRVREFTMAEIEHFVDPTEKDHPKFPSVADLYLYLYSAKAQVTGQSARKMRLGDAVEQGVINNSVLGYFIGRIYLYLTKVGISPDKLRFRQHMENEMAHYACDCWDAESKTSYGWIEIVGCADRSCYDLSCHARATKVPLVAEKPLKEPKTVNVVQFEPNKGAVGKAYKKDAKLVLEYLGACDECYITEMELLLSEKGEFTIETEGKTFQLTKDMVSVKRFQKTLHVEEVVPSVIEPSFGLGRIMYTILEHTFHVREGDEQRTFFSFPAVVAPFKCSVLPLSQNQEFMPFVKELSEALTRNGVSHKVDDSSGSIGRRYARTDEIGVAFGITIDFDTVNKTPHTATLRDRDSMRQIRAEVSELPSVVRDLANGNITWADVEARYPLFEGQETGKKETVEE</sequence>
<dbReference type="EC" id="6.1.1.14" evidence="1"/>
<dbReference type="EC" id="2.7.7.-" evidence="1"/>
<dbReference type="EMBL" id="AABR07060610">
    <property type="status" value="NOT_ANNOTATED_CDS"/>
    <property type="molecule type" value="Genomic_DNA"/>
</dbReference>
<dbReference type="EMBL" id="AABR07060611">
    <property type="status" value="NOT_ANNOTATED_CDS"/>
    <property type="molecule type" value="Genomic_DNA"/>
</dbReference>
<dbReference type="EMBL" id="CH474011">
    <property type="protein sequence ID" value="EDL88100.1"/>
    <property type="molecule type" value="Genomic_DNA"/>
</dbReference>
<dbReference type="EMBL" id="BC088347">
    <property type="protein sequence ID" value="AAH88347.1"/>
    <property type="molecule type" value="mRNA"/>
</dbReference>
<dbReference type="RefSeq" id="NP_001258068.1">
    <property type="nucleotide sequence ID" value="NM_001271139.2"/>
</dbReference>
<dbReference type="SMR" id="Q5I0G4"/>
<dbReference type="FunCoup" id="Q5I0G4">
    <property type="interactions" value="3079"/>
</dbReference>
<dbReference type="IntAct" id="Q5I0G4">
    <property type="interactions" value="2"/>
</dbReference>
<dbReference type="STRING" id="10116.ENSRNOP00000014780"/>
<dbReference type="PhosphoSitePlus" id="Q5I0G4"/>
<dbReference type="jPOST" id="Q5I0G4"/>
<dbReference type="PaxDb" id="10116-ENSRNOP00000014780"/>
<dbReference type="PeptideAtlas" id="Q5I0G4"/>
<dbReference type="GeneID" id="297113"/>
<dbReference type="KEGG" id="rno:297113"/>
<dbReference type="UCSC" id="RGD:1307856">
    <property type="organism name" value="rat"/>
</dbReference>
<dbReference type="AGR" id="RGD:1307856"/>
<dbReference type="CTD" id="2617"/>
<dbReference type="RGD" id="1307856">
    <property type="gene designation" value="Gars1"/>
</dbReference>
<dbReference type="VEuPathDB" id="HostDB:ENSRNOG00000011052"/>
<dbReference type="eggNOG" id="KOG2298">
    <property type="taxonomic scope" value="Eukaryota"/>
</dbReference>
<dbReference type="HOGENOM" id="CLU_015515_1_0_1"/>
<dbReference type="InParanoid" id="Q5I0G4"/>
<dbReference type="OrthoDB" id="11598at9989"/>
<dbReference type="PhylomeDB" id="Q5I0G4"/>
<dbReference type="TreeFam" id="TF343504"/>
<dbReference type="PRO" id="PR:Q5I0G4"/>
<dbReference type="Proteomes" id="UP000002494">
    <property type="component" value="Chromosome 4"/>
</dbReference>
<dbReference type="Proteomes" id="UP000234681">
    <property type="component" value="Chromosome 4"/>
</dbReference>
<dbReference type="Bgee" id="ENSRNOG00000011052">
    <property type="expression patterns" value="Expressed in pancreas and 20 other cell types or tissues"/>
</dbReference>
<dbReference type="GO" id="GO:0030424">
    <property type="term" value="C:axon"/>
    <property type="evidence" value="ECO:0000250"/>
    <property type="project" value="UniProtKB"/>
</dbReference>
<dbReference type="GO" id="GO:0005737">
    <property type="term" value="C:cytoplasm"/>
    <property type="evidence" value="ECO:0000318"/>
    <property type="project" value="GO_Central"/>
</dbReference>
<dbReference type="GO" id="GO:0070062">
    <property type="term" value="C:extracellular exosome"/>
    <property type="evidence" value="ECO:0000250"/>
    <property type="project" value="UniProtKB"/>
</dbReference>
<dbReference type="GO" id="GO:0005739">
    <property type="term" value="C:mitochondrion"/>
    <property type="evidence" value="ECO:0000318"/>
    <property type="project" value="GO_Central"/>
</dbReference>
<dbReference type="GO" id="GO:0030141">
    <property type="term" value="C:secretory granule"/>
    <property type="evidence" value="ECO:0000266"/>
    <property type="project" value="RGD"/>
</dbReference>
<dbReference type="GO" id="GO:0005524">
    <property type="term" value="F:ATP binding"/>
    <property type="evidence" value="ECO:0007669"/>
    <property type="project" value="UniProtKB-KW"/>
</dbReference>
<dbReference type="GO" id="GO:0141192">
    <property type="term" value="F:ATP:ATP adenylyltransferase activity"/>
    <property type="evidence" value="ECO:0007669"/>
    <property type="project" value="RHEA"/>
</dbReference>
<dbReference type="GO" id="GO:0004081">
    <property type="term" value="F:bis(5'-nucleosyl)-tetraphosphatase (asymmetrical) activity"/>
    <property type="evidence" value="ECO:0000250"/>
    <property type="project" value="UniProtKB"/>
</dbReference>
<dbReference type="GO" id="GO:0004820">
    <property type="term" value="F:glycine-tRNA ligase activity"/>
    <property type="evidence" value="ECO:0000250"/>
    <property type="project" value="UniProtKB"/>
</dbReference>
<dbReference type="GO" id="GO:0042802">
    <property type="term" value="F:identical protein binding"/>
    <property type="evidence" value="ECO:0000266"/>
    <property type="project" value="RGD"/>
</dbReference>
<dbReference type="GO" id="GO:0046983">
    <property type="term" value="F:protein dimerization activity"/>
    <property type="evidence" value="ECO:0000250"/>
    <property type="project" value="UniProtKB"/>
</dbReference>
<dbReference type="GO" id="GO:0015966">
    <property type="term" value="P:diadenosine tetraphosphate biosynthetic process"/>
    <property type="evidence" value="ECO:0000250"/>
    <property type="project" value="UniProtKB"/>
</dbReference>
<dbReference type="GO" id="GO:0006426">
    <property type="term" value="P:glycyl-tRNA aminoacylation"/>
    <property type="evidence" value="ECO:0000266"/>
    <property type="project" value="RGD"/>
</dbReference>
<dbReference type="GO" id="GO:0070150">
    <property type="term" value="P:mitochondrial glycyl-tRNA aminoacylation"/>
    <property type="evidence" value="ECO:0000318"/>
    <property type="project" value="GO_Central"/>
</dbReference>
<dbReference type="GO" id="GO:0006418">
    <property type="term" value="P:tRNA aminoacylation for protein translation"/>
    <property type="evidence" value="ECO:0000250"/>
    <property type="project" value="UniProtKB"/>
</dbReference>
<dbReference type="CDD" id="cd00774">
    <property type="entry name" value="GlyRS-like_core"/>
    <property type="match status" value="1"/>
</dbReference>
<dbReference type="CDD" id="cd00858">
    <property type="entry name" value="GlyRS_anticodon"/>
    <property type="match status" value="1"/>
</dbReference>
<dbReference type="CDD" id="cd00935">
    <property type="entry name" value="GlyRS_RNA"/>
    <property type="match status" value="1"/>
</dbReference>
<dbReference type="FunFam" id="3.30.40.230:FF:000001">
    <property type="entry name" value="Glycine--tRNA ligase"/>
    <property type="match status" value="1"/>
</dbReference>
<dbReference type="FunFam" id="3.30.720.200:FF:000001">
    <property type="entry name" value="Glycine--tRNA ligase 2"/>
    <property type="match status" value="1"/>
</dbReference>
<dbReference type="FunFam" id="3.40.50.800:FF:000004">
    <property type="entry name" value="Glycine--tRNA ligase 2"/>
    <property type="match status" value="1"/>
</dbReference>
<dbReference type="FunFam" id="1.10.287.10:FF:000007">
    <property type="entry name" value="Glycyl-tRNA synthetase"/>
    <property type="match status" value="1"/>
</dbReference>
<dbReference type="FunFam" id="3.30.930.10:FF:000158">
    <property type="entry name" value="Glycyl-tRNA synthetase"/>
    <property type="match status" value="1"/>
</dbReference>
<dbReference type="FunFam" id="3.30.930.10:FF:000010">
    <property type="entry name" value="Glycyl-tRNA synthetase 1"/>
    <property type="match status" value="1"/>
</dbReference>
<dbReference type="Gene3D" id="3.30.40.230">
    <property type="match status" value="1"/>
</dbReference>
<dbReference type="Gene3D" id="3.30.720.200">
    <property type="match status" value="1"/>
</dbReference>
<dbReference type="Gene3D" id="3.40.50.800">
    <property type="entry name" value="Anticodon-binding domain"/>
    <property type="match status" value="1"/>
</dbReference>
<dbReference type="Gene3D" id="3.30.930.10">
    <property type="entry name" value="Bira Bifunctional Protein, Domain 2"/>
    <property type="match status" value="1"/>
</dbReference>
<dbReference type="Gene3D" id="1.10.287.10">
    <property type="entry name" value="S15/NS1, RNA-binding"/>
    <property type="match status" value="1"/>
</dbReference>
<dbReference type="InterPro" id="IPR002314">
    <property type="entry name" value="aa-tRNA-synt_IIb"/>
</dbReference>
<dbReference type="InterPro" id="IPR006195">
    <property type="entry name" value="aa-tRNA-synth_II"/>
</dbReference>
<dbReference type="InterPro" id="IPR045864">
    <property type="entry name" value="aa-tRNA-synth_II/BPL/LPL"/>
</dbReference>
<dbReference type="InterPro" id="IPR004154">
    <property type="entry name" value="Anticodon-bd"/>
</dbReference>
<dbReference type="InterPro" id="IPR036621">
    <property type="entry name" value="Anticodon-bd_dom_sf"/>
</dbReference>
<dbReference type="InterPro" id="IPR027031">
    <property type="entry name" value="Gly-tRNA_synthase/POLG2"/>
</dbReference>
<dbReference type="InterPro" id="IPR033731">
    <property type="entry name" value="GlyRS-like_core"/>
</dbReference>
<dbReference type="InterPro" id="IPR002315">
    <property type="entry name" value="tRNA-synt_gly"/>
</dbReference>
<dbReference type="InterPro" id="IPR009068">
    <property type="entry name" value="uS15_NS1_RNA-bd_sf"/>
</dbReference>
<dbReference type="InterPro" id="IPR000738">
    <property type="entry name" value="WHEP-TRS_dom"/>
</dbReference>
<dbReference type="NCBIfam" id="TIGR00389">
    <property type="entry name" value="glyS_dimeric"/>
    <property type="match status" value="1"/>
</dbReference>
<dbReference type="NCBIfam" id="NF003211">
    <property type="entry name" value="PRK04173.1"/>
    <property type="match status" value="1"/>
</dbReference>
<dbReference type="PANTHER" id="PTHR10745:SF0">
    <property type="entry name" value="GLYCINE--TRNA LIGASE"/>
    <property type="match status" value="1"/>
</dbReference>
<dbReference type="PANTHER" id="PTHR10745">
    <property type="entry name" value="GLYCYL-TRNA SYNTHETASE/DNA POLYMERASE SUBUNIT GAMMA-2"/>
    <property type="match status" value="1"/>
</dbReference>
<dbReference type="Pfam" id="PF03129">
    <property type="entry name" value="HGTP_anticodon"/>
    <property type="match status" value="1"/>
</dbReference>
<dbReference type="Pfam" id="PF00587">
    <property type="entry name" value="tRNA-synt_2b"/>
    <property type="match status" value="1"/>
</dbReference>
<dbReference type="Pfam" id="PF00458">
    <property type="entry name" value="WHEP-TRS"/>
    <property type="match status" value="1"/>
</dbReference>
<dbReference type="PRINTS" id="PR01043">
    <property type="entry name" value="TRNASYNTHGLY"/>
</dbReference>
<dbReference type="SMART" id="SM00991">
    <property type="entry name" value="WHEP-TRS"/>
    <property type="match status" value="1"/>
</dbReference>
<dbReference type="SUPFAM" id="SSF52954">
    <property type="entry name" value="Class II aaRS ABD-related"/>
    <property type="match status" value="1"/>
</dbReference>
<dbReference type="SUPFAM" id="SSF55681">
    <property type="entry name" value="Class II aaRS and biotin synthetases"/>
    <property type="match status" value="1"/>
</dbReference>
<dbReference type="SUPFAM" id="SSF47060">
    <property type="entry name" value="S15/NS1 RNA-binding domain"/>
    <property type="match status" value="1"/>
</dbReference>
<dbReference type="PROSITE" id="PS50862">
    <property type="entry name" value="AA_TRNA_LIGASE_II"/>
    <property type="match status" value="1"/>
</dbReference>
<dbReference type="PROSITE" id="PS00762">
    <property type="entry name" value="WHEP_TRS_1"/>
    <property type="match status" value="1"/>
</dbReference>
<dbReference type="PROSITE" id="PS51185">
    <property type="entry name" value="WHEP_TRS_2"/>
    <property type="match status" value="1"/>
</dbReference>
<gene>
    <name type="primary">Gars1</name>
    <name evidence="7" type="synonym">Gars</name>
</gene>
<organism>
    <name type="scientific">Rattus norvegicus</name>
    <name type="common">Rat</name>
    <dbReference type="NCBI Taxonomy" id="10116"/>
    <lineage>
        <taxon>Eukaryota</taxon>
        <taxon>Metazoa</taxon>
        <taxon>Chordata</taxon>
        <taxon>Craniata</taxon>
        <taxon>Vertebrata</taxon>
        <taxon>Euteleostomi</taxon>
        <taxon>Mammalia</taxon>
        <taxon>Eutheria</taxon>
        <taxon>Euarchontoglires</taxon>
        <taxon>Glires</taxon>
        <taxon>Rodentia</taxon>
        <taxon>Myomorpha</taxon>
        <taxon>Muroidea</taxon>
        <taxon>Muridae</taxon>
        <taxon>Murinae</taxon>
        <taxon>Rattus</taxon>
    </lineage>
</organism>
<name>GARS_RAT</name>
<reference key="1">
    <citation type="journal article" date="2004" name="Nature">
        <title>Genome sequence of the Brown Norway rat yields insights into mammalian evolution.</title>
        <authorList>
            <person name="Gibbs R.A."/>
            <person name="Weinstock G.M."/>
            <person name="Metzker M.L."/>
            <person name="Muzny D.M."/>
            <person name="Sodergren E.J."/>
            <person name="Scherer S."/>
            <person name="Scott G."/>
            <person name="Steffen D."/>
            <person name="Worley K.C."/>
            <person name="Burch P.E."/>
            <person name="Okwuonu G."/>
            <person name="Hines S."/>
            <person name="Lewis L."/>
            <person name="Deramo C."/>
            <person name="Delgado O."/>
            <person name="Dugan-Rocha S."/>
            <person name="Miner G."/>
            <person name="Morgan M."/>
            <person name="Hawes A."/>
            <person name="Gill R."/>
            <person name="Holt R.A."/>
            <person name="Adams M.D."/>
            <person name="Amanatides P.G."/>
            <person name="Baden-Tillson H."/>
            <person name="Barnstead M."/>
            <person name="Chin S."/>
            <person name="Evans C.A."/>
            <person name="Ferriera S."/>
            <person name="Fosler C."/>
            <person name="Glodek A."/>
            <person name="Gu Z."/>
            <person name="Jennings D."/>
            <person name="Kraft C.L."/>
            <person name="Nguyen T."/>
            <person name="Pfannkoch C.M."/>
            <person name="Sitter C."/>
            <person name="Sutton G.G."/>
            <person name="Venter J.C."/>
            <person name="Woodage T."/>
            <person name="Smith D."/>
            <person name="Lee H.-M."/>
            <person name="Gustafson E."/>
            <person name="Cahill P."/>
            <person name="Kana A."/>
            <person name="Doucette-Stamm L."/>
            <person name="Weinstock K."/>
            <person name="Fechtel K."/>
            <person name="Weiss R.B."/>
            <person name="Dunn D.M."/>
            <person name="Green E.D."/>
            <person name="Blakesley R.W."/>
            <person name="Bouffard G.G."/>
            <person name="De Jong P.J."/>
            <person name="Osoegawa K."/>
            <person name="Zhu B."/>
            <person name="Marra M."/>
            <person name="Schein J."/>
            <person name="Bosdet I."/>
            <person name="Fjell C."/>
            <person name="Jones S."/>
            <person name="Krzywinski M."/>
            <person name="Mathewson C."/>
            <person name="Siddiqui A."/>
            <person name="Wye N."/>
            <person name="McPherson J."/>
            <person name="Zhao S."/>
            <person name="Fraser C.M."/>
            <person name="Shetty J."/>
            <person name="Shatsman S."/>
            <person name="Geer K."/>
            <person name="Chen Y."/>
            <person name="Abramzon S."/>
            <person name="Nierman W.C."/>
            <person name="Havlak P.H."/>
            <person name="Chen R."/>
            <person name="Durbin K.J."/>
            <person name="Egan A."/>
            <person name="Ren Y."/>
            <person name="Song X.-Z."/>
            <person name="Li B."/>
            <person name="Liu Y."/>
            <person name="Qin X."/>
            <person name="Cawley S."/>
            <person name="Cooney A.J."/>
            <person name="D'Souza L.M."/>
            <person name="Martin K."/>
            <person name="Wu J.Q."/>
            <person name="Gonzalez-Garay M.L."/>
            <person name="Jackson A.R."/>
            <person name="Kalafus K.J."/>
            <person name="McLeod M.P."/>
            <person name="Milosavljevic A."/>
            <person name="Virk D."/>
            <person name="Volkov A."/>
            <person name="Wheeler D.A."/>
            <person name="Zhang Z."/>
            <person name="Bailey J.A."/>
            <person name="Eichler E.E."/>
            <person name="Tuzun E."/>
            <person name="Birney E."/>
            <person name="Mongin E."/>
            <person name="Ureta-Vidal A."/>
            <person name="Woodwark C."/>
            <person name="Zdobnov E."/>
            <person name="Bork P."/>
            <person name="Suyama M."/>
            <person name="Torrents D."/>
            <person name="Alexandersson M."/>
            <person name="Trask B.J."/>
            <person name="Young J.M."/>
            <person name="Huang H."/>
            <person name="Wang H."/>
            <person name="Xing H."/>
            <person name="Daniels S."/>
            <person name="Gietzen D."/>
            <person name="Schmidt J."/>
            <person name="Stevens K."/>
            <person name="Vitt U."/>
            <person name="Wingrove J."/>
            <person name="Camara F."/>
            <person name="Mar Alba M."/>
            <person name="Abril J.F."/>
            <person name="Guigo R."/>
            <person name="Smit A."/>
            <person name="Dubchak I."/>
            <person name="Rubin E.M."/>
            <person name="Couronne O."/>
            <person name="Poliakov A."/>
            <person name="Huebner N."/>
            <person name="Ganten D."/>
            <person name="Goesele C."/>
            <person name="Hummel O."/>
            <person name="Kreitler T."/>
            <person name="Lee Y.-A."/>
            <person name="Monti J."/>
            <person name="Schulz H."/>
            <person name="Zimdahl H."/>
            <person name="Himmelbauer H."/>
            <person name="Lehrach H."/>
            <person name="Jacob H.J."/>
            <person name="Bromberg S."/>
            <person name="Gullings-Handley J."/>
            <person name="Jensen-Seaman M.I."/>
            <person name="Kwitek A.E."/>
            <person name="Lazar J."/>
            <person name="Pasko D."/>
            <person name="Tonellato P.J."/>
            <person name="Twigger S."/>
            <person name="Ponting C.P."/>
            <person name="Duarte J.M."/>
            <person name="Rice S."/>
            <person name="Goodstadt L."/>
            <person name="Beatson S.A."/>
            <person name="Emes R.D."/>
            <person name="Winter E.E."/>
            <person name="Webber C."/>
            <person name="Brandt P."/>
            <person name="Nyakatura G."/>
            <person name="Adetobi M."/>
            <person name="Chiaromonte F."/>
            <person name="Elnitski L."/>
            <person name="Eswara P."/>
            <person name="Hardison R.C."/>
            <person name="Hou M."/>
            <person name="Kolbe D."/>
            <person name="Makova K."/>
            <person name="Miller W."/>
            <person name="Nekrutenko A."/>
            <person name="Riemer C."/>
            <person name="Schwartz S."/>
            <person name="Taylor J."/>
            <person name="Yang S."/>
            <person name="Zhang Y."/>
            <person name="Lindpaintner K."/>
            <person name="Andrews T.D."/>
            <person name="Caccamo M."/>
            <person name="Clamp M."/>
            <person name="Clarke L."/>
            <person name="Curwen V."/>
            <person name="Durbin R.M."/>
            <person name="Eyras E."/>
            <person name="Searle S.M."/>
            <person name="Cooper G.M."/>
            <person name="Batzoglou S."/>
            <person name="Brudno M."/>
            <person name="Sidow A."/>
            <person name="Stone E.A."/>
            <person name="Payseur B.A."/>
            <person name="Bourque G."/>
            <person name="Lopez-Otin C."/>
            <person name="Puente X.S."/>
            <person name="Chakrabarti K."/>
            <person name="Chatterji S."/>
            <person name="Dewey C."/>
            <person name="Pachter L."/>
            <person name="Bray N."/>
            <person name="Yap V.B."/>
            <person name="Caspi A."/>
            <person name="Tesler G."/>
            <person name="Pevzner P.A."/>
            <person name="Haussler D."/>
            <person name="Roskin K.M."/>
            <person name="Baertsch R."/>
            <person name="Clawson H."/>
            <person name="Furey T.S."/>
            <person name="Hinrichs A.S."/>
            <person name="Karolchik D."/>
            <person name="Kent W.J."/>
            <person name="Rosenbloom K.R."/>
            <person name="Trumbower H."/>
            <person name="Weirauch M."/>
            <person name="Cooper D.N."/>
            <person name="Stenson P.D."/>
            <person name="Ma B."/>
            <person name="Brent M."/>
            <person name="Arumugam M."/>
            <person name="Shteynberg D."/>
            <person name="Copley R.R."/>
            <person name="Taylor M.S."/>
            <person name="Riethman H."/>
            <person name="Mudunuri U."/>
            <person name="Peterson J."/>
            <person name="Guyer M."/>
            <person name="Felsenfeld A."/>
            <person name="Old S."/>
            <person name="Mockrin S."/>
            <person name="Collins F.S."/>
        </authorList>
    </citation>
    <scope>NUCLEOTIDE SEQUENCE [LARGE SCALE GENOMIC DNA]</scope>
    <source>
        <strain>Brown Norway</strain>
    </source>
</reference>
<reference key="2">
    <citation type="submission" date="2005-09" db="EMBL/GenBank/DDBJ databases">
        <authorList>
            <person name="Mural R.J."/>
            <person name="Adams M.D."/>
            <person name="Myers E.W."/>
            <person name="Smith H.O."/>
            <person name="Venter J.C."/>
        </authorList>
    </citation>
    <scope>NUCLEOTIDE SEQUENCE [LARGE SCALE GENOMIC DNA]</scope>
</reference>
<reference evidence="5 6" key="3">
    <citation type="journal article" date="2004" name="Genome Res.">
        <title>The status, quality, and expansion of the NIH full-length cDNA project: the Mammalian Gene Collection (MGC).</title>
        <authorList>
            <consortium name="The MGC Project Team"/>
        </authorList>
    </citation>
    <scope>NUCLEOTIDE SEQUENCE [LARGE SCALE MRNA]</scope>
    <source>
        <tissue evidence="6">Spleen</tissue>
    </source>
</reference>
<reference evidence="5" key="4">
    <citation type="submission" date="2009-01" db="UniProtKB">
        <authorList>
            <person name="Maurya D.K."/>
            <person name="Bhargava P."/>
        </authorList>
    </citation>
    <scope>IDENTIFICATION BY MASS SPECTROMETRY</scope>
</reference>
<evidence type="ECO:0000250" key="1">
    <source>
        <dbReference type="UniProtKB" id="P41250"/>
    </source>
</evidence>
<evidence type="ECO:0000250" key="2">
    <source>
        <dbReference type="UniProtKB" id="Q9CZD3"/>
    </source>
</evidence>
<evidence type="ECO:0000255" key="3"/>
<evidence type="ECO:0000255" key="4">
    <source>
        <dbReference type="PROSITE-ProRule" id="PRU00531"/>
    </source>
</evidence>
<evidence type="ECO:0000305" key="5"/>
<evidence type="ECO:0000312" key="6">
    <source>
        <dbReference type="EMBL" id="AAH88347.1"/>
    </source>
</evidence>
<evidence type="ECO:0000312" key="7">
    <source>
        <dbReference type="RGD" id="1307856"/>
    </source>
</evidence>
<keyword id="KW-0007">Acetylation</keyword>
<keyword id="KW-0030">Aminoacyl-tRNA synthetase</keyword>
<keyword id="KW-0067">ATP-binding</keyword>
<keyword id="KW-0966">Cell projection</keyword>
<keyword id="KW-0963">Cytoplasm</keyword>
<keyword id="KW-0378">Hydrolase</keyword>
<keyword id="KW-0436">Ligase</keyword>
<keyword id="KW-0496">Mitochondrion</keyword>
<keyword id="KW-0547">Nucleotide-binding</keyword>
<keyword id="KW-0597">Phosphoprotein</keyword>
<keyword id="KW-0648">Protein biosynthesis</keyword>
<keyword id="KW-1185">Reference proteome</keyword>
<keyword id="KW-0964">Secreted</keyword>
<keyword id="KW-0808">Transferase</keyword>
<keyword id="KW-0809">Transit peptide</keyword>
<feature type="transit peptide" description="Mitochondrion" evidence="3">
    <location>
        <begin position="1"/>
        <end position="32"/>
    </location>
</feature>
<feature type="chain" id="PRO_0000365479" description="Glycine--tRNA ligase" evidence="3">
    <location>
        <begin position="33"/>
        <end position="728"/>
    </location>
</feature>
<feature type="domain" description="WHEP-TRS" evidence="4">
    <location>
        <begin position="52"/>
        <end position="108"/>
    </location>
</feature>
<feature type="binding site" evidence="1">
    <location>
        <position position="288"/>
    </location>
    <ligand>
        <name>glycine</name>
        <dbReference type="ChEBI" id="CHEBI:57305"/>
    </ligand>
</feature>
<feature type="binding site" evidence="1">
    <location>
        <begin position="320"/>
        <end position="322"/>
    </location>
    <ligand>
        <name>ATP</name>
        <dbReference type="ChEBI" id="CHEBI:30616"/>
    </ligand>
</feature>
<feature type="binding site" evidence="1">
    <location>
        <begin position="331"/>
        <end position="332"/>
    </location>
    <ligand>
        <name>ATP</name>
        <dbReference type="ChEBI" id="CHEBI:30616"/>
    </ligand>
</feature>
<feature type="binding site" evidence="1">
    <location>
        <position position="339"/>
    </location>
    <ligand>
        <name>glycine</name>
        <dbReference type="ChEBI" id="CHEBI:57305"/>
    </ligand>
</feature>
<feature type="binding site" evidence="1">
    <location>
        <begin position="446"/>
        <end position="447"/>
    </location>
    <ligand>
        <name>ATP</name>
        <dbReference type="ChEBI" id="CHEBI:30616"/>
    </ligand>
</feature>
<feature type="binding site" evidence="1">
    <location>
        <begin position="565"/>
        <end position="567"/>
    </location>
    <ligand>
        <name>glycine</name>
        <dbReference type="ChEBI" id="CHEBI:57305"/>
    </ligand>
</feature>
<feature type="binding site" evidence="1">
    <location>
        <position position="572"/>
    </location>
    <ligand>
        <name>ATP</name>
        <dbReference type="ChEBI" id="CHEBI:30616"/>
    </ligand>
</feature>
<feature type="modified residue" description="N6-acetyllysine" evidence="1">
    <location>
        <position position="193"/>
    </location>
</feature>
<feature type="modified residue" description="Phosphotyrosine" evidence="2">
    <location>
        <position position="442"/>
    </location>
</feature>
<feature type="modified residue" description="N6-acetyllysine" evidence="1">
    <location>
        <position position="490"/>
    </location>
</feature>
<feature type="modified residue" description="Phosphoserine" evidence="2">
    <location>
        <position position="689"/>
    </location>
</feature>
<feature type="modified residue" description="Phosphothreonine" evidence="1">
    <location>
        <position position="725"/>
    </location>
</feature>
<protein>
    <recommendedName>
        <fullName evidence="2">Glycine--tRNA ligase</fullName>
        <ecNumber evidence="1">6.1.1.14</ecNumber>
    </recommendedName>
    <alternativeName>
        <fullName>Diadenosine tetraphosphate synthetase</fullName>
        <shortName>Ap4A synthetase</shortName>
        <ecNumber evidence="1">2.7.7.-</ecNumber>
    </alternativeName>
    <alternativeName>
        <fullName evidence="2">Glycyl-tRNA synthetase</fullName>
        <shortName evidence="2">GlyRS</shortName>
    </alternativeName>
    <alternativeName>
        <fullName evidence="1">Glycyl-tRNA synthetase 1</fullName>
    </alternativeName>
</protein>
<comment type="function">
    <text evidence="1">Catalyzes the ATP-dependent ligation of glycine to the 3'-end of its cognate tRNA, via the formation of an aminoacyl-adenylate intermediate (Gly-AMP). Also produces diadenosine tetraphosphate (Ap4A), a universal pleiotropic signaling molecule needed for cell regulation pathways, by direct condensation of 2 ATPs. Thereby, may play a special role in Ap4A homeostasis.</text>
</comment>
<comment type="catalytic activity">
    <reaction evidence="1">
        <text>tRNA(Gly) + glycine + ATP = glycyl-tRNA(Gly) + AMP + diphosphate</text>
        <dbReference type="Rhea" id="RHEA:16013"/>
        <dbReference type="Rhea" id="RHEA-COMP:9664"/>
        <dbReference type="Rhea" id="RHEA-COMP:9683"/>
        <dbReference type="ChEBI" id="CHEBI:30616"/>
        <dbReference type="ChEBI" id="CHEBI:33019"/>
        <dbReference type="ChEBI" id="CHEBI:57305"/>
        <dbReference type="ChEBI" id="CHEBI:78442"/>
        <dbReference type="ChEBI" id="CHEBI:78522"/>
        <dbReference type="ChEBI" id="CHEBI:456215"/>
        <dbReference type="EC" id="6.1.1.14"/>
    </reaction>
    <physiologicalReaction direction="left-to-right" evidence="1">
        <dbReference type="Rhea" id="RHEA:16014"/>
    </physiologicalReaction>
</comment>
<comment type="catalytic activity">
    <reaction evidence="1">
        <text>2 ATP + H(+) = P(1),P(4)-bis(5'-adenosyl) tetraphosphate + diphosphate</text>
        <dbReference type="Rhea" id="RHEA:34935"/>
        <dbReference type="ChEBI" id="CHEBI:15378"/>
        <dbReference type="ChEBI" id="CHEBI:30616"/>
        <dbReference type="ChEBI" id="CHEBI:33019"/>
        <dbReference type="ChEBI" id="CHEBI:58141"/>
    </reaction>
    <physiologicalReaction direction="left-to-right" evidence="1">
        <dbReference type="Rhea" id="RHEA:34936"/>
    </physiologicalReaction>
</comment>
<comment type="subunit">
    <text evidence="1">Homodimer.</text>
</comment>
<comment type="subcellular location">
    <subcellularLocation>
        <location evidence="1">Cytoplasm</location>
    </subcellularLocation>
    <subcellularLocation>
        <location evidence="2">Mitochondrion</location>
    </subcellularLocation>
    <subcellularLocation>
        <location evidence="1">Cell projection</location>
        <location evidence="1">Axon</location>
    </subcellularLocation>
    <subcellularLocation>
        <location evidence="2">Secreted</location>
    </subcellularLocation>
    <subcellularLocation>
        <location evidence="2">Secreted</location>
        <location evidence="2">Extracellular exosome</location>
    </subcellularLocation>
    <text evidence="2">Secreted by motor neuron, possibly through the exosome pathway (By similarity).</text>
</comment>
<comment type="similarity">
    <text evidence="3">Belongs to the class-II aminoacyl-tRNA synthetase family.</text>
</comment>